<dbReference type="EMBL" id="L42023">
    <property type="protein sequence ID" value="AAC22376.1"/>
    <property type="molecule type" value="Genomic_DNA"/>
</dbReference>
<dbReference type="PIR" id="C64157">
    <property type="entry name" value="C64157"/>
</dbReference>
<dbReference type="RefSeq" id="NP_438877.1">
    <property type="nucleotide sequence ID" value="NC_000907.1"/>
</dbReference>
<dbReference type="PDB" id="1J7H">
    <property type="method" value="NMR"/>
    <property type="chains" value="A/B/C=1-130"/>
</dbReference>
<dbReference type="PDBsum" id="1J7H"/>
<dbReference type="BMRB" id="P44839"/>
<dbReference type="SMR" id="P44839"/>
<dbReference type="STRING" id="71421.HI_0719"/>
<dbReference type="EnsemblBacteria" id="AAC22376">
    <property type="protein sequence ID" value="AAC22376"/>
    <property type="gene ID" value="HI_0719"/>
</dbReference>
<dbReference type="KEGG" id="hin:HI_0719"/>
<dbReference type="PATRIC" id="fig|71421.8.peg.751"/>
<dbReference type="eggNOG" id="COG0251">
    <property type="taxonomic scope" value="Bacteria"/>
</dbReference>
<dbReference type="HOGENOM" id="CLU_100715_7_1_6"/>
<dbReference type="OrthoDB" id="9803101at2"/>
<dbReference type="PhylomeDB" id="P44839"/>
<dbReference type="BioCyc" id="HINF71421:G1GJ1-753-MONOMER"/>
<dbReference type="EvolutionaryTrace" id="P44839"/>
<dbReference type="Proteomes" id="UP000000579">
    <property type="component" value="Chromosome"/>
</dbReference>
<dbReference type="GO" id="GO:0005829">
    <property type="term" value="C:cytosol"/>
    <property type="evidence" value="ECO:0000318"/>
    <property type="project" value="GO_Central"/>
</dbReference>
<dbReference type="GO" id="GO:0019239">
    <property type="term" value="F:deaminase activity"/>
    <property type="evidence" value="ECO:0000318"/>
    <property type="project" value="GO_Central"/>
</dbReference>
<dbReference type="CDD" id="cd00448">
    <property type="entry name" value="YjgF_YER057c_UK114_family"/>
    <property type="match status" value="1"/>
</dbReference>
<dbReference type="FunFam" id="3.30.1330.40:FF:000001">
    <property type="entry name" value="L-PSP family endoribonuclease"/>
    <property type="match status" value="1"/>
</dbReference>
<dbReference type="Gene3D" id="3.30.1330.40">
    <property type="entry name" value="RutC-like"/>
    <property type="match status" value="1"/>
</dbReference>
<dbReference type="InterPro" id="IPR006056">
    <property type="entry name" value="RidA"/>
</dbReference>
<dbReference type="InterPro" id="IPR019897">
    <property type="entry name" value="RidA_CS"/>
</dbReference>
<dbReference type="InterPro" id="IPR035959">
    <property type="entry name" value="RutC-like_sf"/>
</dbReference>
<dbReference type="InterPro" id="IPR006175">
    <property type="entry name" value="YjgF/YER057c/UK114"/>
</dbReference>
<dbReference type="NCBIfam" id="TIGR00004">
    <property type="entry name" value="Rid family detoxifying hydrolase"/>
    <property type="match status" value="1"/>
</dbReference>
<dbReference type="PANTHER" id="PTHR11803">
    <property type="entry name" value="2-IMINOBUTANOATE/2-IMINOPROPANOATE DEAMINASE RIDA"/>
    <property type="match status" value="1"/>
</dbReference>
<dbReference type="PANTHER" id="PTHR11803:SF39">
    <property type="entry name" value="2-IMINOBUTANOATE_2-IMINOPROPANOATE DEAMINASE"/>
    <property type="match status" value="1"/>
</dbReference>
<dbReference type="Pfam" id="PF01042">
    <property type="entry name" value="Ribonuc_L-PSP"/>
    <property type="match status" value="1"/>
</dbReference>
<dbReference type="SUPFAM" id="SSF55298">
    <property type="entry name" value="YjgF-like"/>
    <property type="match status" value="1"/>
</dbReference>
<dbReference type="PROSITE" id="PS01094">
    <property type="entry name" value="UPF0076"/>
    <property type="match status" value="1"/>
</dbReference>
<evidence type="ECO:0000250" key="1"/>
<evidence type="ECO:0000255" key="2"/>
<evidence type="ECO:0000305" key="3"/>
<evidence type="ECO:0007829" key="4">
    <source>
        <dbReference type="PDB" id="1J7H"/>
    </source>
</evidence>
<comment type="subunit">
    <text evidence="1">Homotrimer.</text>
</comment>
<comment type="similarity">
    <text evidence="3">Belongs to the RutC family.</text>
</comment>
<organism>
    <name type="scientific">Haemophilus influenzae (strain ATCC 51907 / DSM 11121 / KW20 / Rd)</name>
    <dbReference type="NCBI Taxonomy" id="71421"/>
    <lineage>
        <taxon>Bacteria</taxon>
        <taxon>Pseudomonadati</taxon>
        <taxon>Pseudomonadota</taxon>
        <taxon>Gammaproteobacteria</taxon>
        <taxon>Pasteurellales</taxon>
        <taxon>Pasteurellaceae</taxon>
        <taxon>Haemophilus</taxon>
    </lineage>
</organism>
<protein>
    <recommendedName>
        <fullName>RutC family protein HI_0719</fullName>
    </recommendedName>
</protein>
<reference key="1">
    <citation type="journal article" date="1995" name="Science">
        <title>Whole-genome random sequencing and assembly of Haemophilus influenzae Rd.</title>
        <authorList>
            <person name="Fleischmann R.D."/>
            <person name="Adams M.D."/>
            <person name="White O."/>
            <person name="Clayton R.A."/>
            <person name="Kirkness E.F."/>
            <person name="Kerlavage A.R."/>
            <person name="Bult C.J."/>
            <person name="Tomb J.-F."/>
            <person name="Dougherty B.A."/>
            <person name="Merrick J.M."/>
            <person name="McKenney K."/>
            <person name="Sutton G.G."/>
            <person name="FitzHugh W."/>
            <person name="Fields C.A."/>
            <person name="Gocayne J.D."/>
            <person name="Scott J.D."/>
            <person name="Shirley R."/>
            <person name="Liu L.-I."/>
            <person name="Glodek A."/>
            <person name="Kelley J.M."/>
            <person name="Weidman J.F."/>
            <person name="Phillips C.A."/>
            <person name="Spriggs T."/>
            <person name="Hedblom E."/>
            <person name="Cotton M.D."/>
            <person name="Utterback T.R."/>
            <person name="Hanna M.C."/>
            <person name="Nguyen D.T."/>
            <person name="Saudek D.M."/>
            <person name="Brandon R.C."/>
            <person name="Fine L.D."/>
            <person name="Fritchman J.L."/>
            <person name="Fuhrmann J.L."/>
            <person name="Geoghagen N.S.M."/>
            <person name="Gnehm C.L."/>
            <person name="McDonald L.A."/>
            <person name="Small K.V."/>
            <person name="Fraser C.M."/>
            <person name="Smith H.O."/>
            <person name="Venter J.C."/>
        </authorList>
    </citation>
    <scope>NUCLEOTIDE SEQUENCE [LARGE SCALE GENOMIC DNA]</scope>
    <source>
        <strain>ATCC 51907 / DSM 11121 / KW20 / Rd</strain>
    </source>
</reference>
<reference key="2">
    <citation type="journal article" date="2000" name="Electrophoresis">
        <title>Two-dimensional map of the proteome of Haemophilus influenzae.</title>
        <authorList>
            <person name="Langen H."/>
            <person name="Takacs B."/>
            <person name="Evers S."/>
            <person name="Berndt P."/>
            <person name="Lahm H.W."/>
            <person name="Wipf B."/>
            <person name="Gray C."/>
            <person name="Fountoulakis M."/>
        </authorList>
    </citation>
    <scope>IDENTIFICATION BY MASS SPECTROMETRY</scope>
    <source>
        <strain>ATCC 51907 / DSM 11121 / KW20 / Rd</strain>
    </source>
</reference>
<keyword id="KW-0002">3D-structure</keyword>
<keyword id="KW-1185">Reference proteome</keyword>
<accession>P44839</accession>
<gene>
    <name type="ordered locus">HI_0719</name>
</gene>
<feature type="chain" id="PRO_0000170324" description="RutC family protein HI_0719">
    <location>
        <begin position="1"/>
        <end position="130"/>
    </location>
</feature>
<feature type="active site" evidence="2">
    <location>
        <position position="109"/>
    </location>
</feature>
<feature type="strand" evidence="4">
    <location>
        <begin position="9"/>
        <end position="12"/>
    </location>
</feature>
<feature type="strand" evidence="4">
    <location>
        <begin position="16"/>
        <end position="18"/>
    </location>
</feature>
<feature type="strand" evidence="4">
    <location>
        <begin position="20"/>
        <end position="23"/>
    </location>
</feature>
<feature type="strand" evidence="4">
    <location>
        <begin position="25"/>
        <end position="30"/>
    </location>
</feature>
<feature type="turn" evidence="4">
    <location>
        <begin position="38"/>
        <end position="40"/>
    </location>
</feature>
<feature type="helix" evidence="4">
    <location>
        <begin position="47"/>
        <end position="65"/>
    </location>
</feature>
<feature type="helix" evidence="4">
    <location>
        <begin position="69"/>
        <end position="71"/>
    </location>
</feature>
<feature type="strand" evidence="4">
    <location>
        <begin position="72"/>
        <end position="80"/>
    </location>
</feature>
<feature type="turn" evidence="4">
    <location>
        <begin position="82"/>
        <end position="84"/>
    </location>
</feature>
<feature type="helix" evidence="4">
    <location>
        <begin position="85"/>
        <end position="96"/>
    </location>
</feature>
<feature type="turn" evidence="4">
    <location>
        <begin position="97"/>
        <end position="100"/>
    </location>
</feature>
<feature type="helix" evidence="4">
    <location>
        <begin position="116"/>
        <end position="118"/>
    </location>
</feature>
<feature type="strand" evidence="4">
    <location>
        <begin position="120"/>
        <end position="128"/>
    </location>
</feature>
<name>Y719_HAEIN</name>
<sequence length="130" mass="14024">MMTQIIHTEKAPAAIGPYVQAVDLGNLVLTSGQIPVNPATGEVPADIVAQARQSLENVKAIIEKAGLTAADIVKTTVFVKDLNDFAAVNAEYERFFKENNHPNFPARSCVEVARLPKDVGLEIEAIAVRK</sequence>
<proteinExistence type="evidence at protein level"/>